<accession>Q96AJ9</accession>
<accession>A2A307</accession>
<accession>B4E137</accession>
<accession>Q5W0D7</accession>
<gene>
    <name type="primary">VTI1A</name>
</gene>
<dbReference type="EMBL" id="AK303646">
    <property type="protein sequence ID" value="BAG64649.1"/>
    <property type="molecule type" value="mRNA"/>
</dbReference>
<dbReference type="EMBL" id="AC022018">
    <property type="status" value="NOT_ANNOTATED_CDS"/>
    <property type="molecule type" value="Genomic_DNA"/>
</dbReference>
<dbReference type="EMBL" id="AL139120">
    <property type="status" value="NOT_ANNOTATED_CDS"/>
    <property type="molecule type" value="Genomic_DNA"/>
</dbReference>
<dbReference type="EMBL" id="AL158212">
    <property type="status" value="NOT_ANNOTATED_CDS"/>
    <property type="molecule type" value="Genomic_DNA"/>
</dbReference>
<dbReference type="EMBL" id="CH471066">
    <property type="protein sequence ID" value="EAW49524.1"/>
    <property type="molecule type" value="Genomic_DNA"/>
</dbReference>
<dbReference type="EMBL" id="CH471066">
    <property type="protein sequence ID" value="EAW49525.1"/>
    <property type="molecule type" value="Genomic_DNA"/>
</dbReference>
<dbReference type="EMBL" id="BC017052">
    <property type="protein sequence ID" value="AAH17052.1"/>
    <property type="molecule type" value="mRNA"/>
</dbReference>
<dbReference type="CCDS" id="CCDS7575.2">
    <molecule id="Q96AJ9-2"/>
</dbReference>
<dbReference type="CCDS" id="CCDS91347.1">
    <molecule id="Q96AJ9-1"/>
</dbReference>
<dbReference type="RefSeq" id="NP_001305132.1">
    <property type="nucleotide sequence ID" value="NM_001318203.1"/>
</dbReference>
<dbReference type="RefSeq" id="NP_001305134.1">
    <property type="nucleotide sequence ID" value="NM_001318205.1"/>
</dbReference>
<dbReference type="RefSeq" id="NP_001352639.1">
    <molecule id="Q96AJ9-1"/>
    <property type="nucleotide sequence ID" value="NM_001365710.2"/>
</dbReference>
<dbReference type="RefSeq" id="NP_660207.2">
    <molecule id="Q96AJ9-2"/>
    <property type="nucleotide sequence ID" value="NM_145206.4"/>
</dbReference>
<dbReference type="RefSeq" id="XP_005269601.1">
    <property type="nucleotide sequence ID" value="XM_005269544.4"/>
</dbReference>
<dbReference type="SMR" id="Q96AJ9"/>
<dbReference type="BioGRID" id="126789">
    <property type="interactions" value="66"/>
</dbReference>
<dbReference type="CORUM" id="Q96AJ9"/>
<dbReference type="DIP" id="DIP-44223N"/>
<dbReference type="FunCoup" id="Q96AJ9">
    <property type="interactions" value="2963"/>
</dbReference>
<dbReference type="IntAct" id="Q96AJ9">
    <property type="interactions" value="46"/>
</dbReference>
<dbReference type="MINT" id="Q96AJ9"/>
<dbReference type="STRING" id="9606.ENSP00000376792"/>
<dbReference type="GlyGen" id="Q96AJ9">
    <property type="glycosylation" value="1 site, 1 N-linked glycan (1 site)"/>
</dbReference>
<dbReference type="iPTMnet" id="Q96AJ9"/>
<dbReference type="MetOSite" id="Q96AJ9"/>
<dbReference type="PhosphoSitePlus" id="Q96AJ9"/>
<dbReference type="BioMuta" id="VTI1A"/>
<dbReference type="DMDM" id="374095459"/>
<dbReference type="jPOST" id="Q96AJ9"/>
<dbReference type="MassIVE" id="Q96AJ9"/>
<dbReference type="PaxDb" id="9606-ENSP00000376792"/>
<dbReference type="PeptideAtlas" id="Q96AJ9"/>
<dbReference type="ProteomicsDB" id="75969">
    <molecule id="Q96AJ9-2"/>
</dbReference>
<dbReference type="ProteomicsDB" id="75970">
    <molecule id="Q96AJ9-1"/>
</dbReference>
<dbReference type="Pumba" id="Q96AJ9"/>
<dbReference type="Antibodypedia" id="31821">
    <property type="antibodies" value="274 antibodies from 31 providers"/>
</dbReference>
<dbReference type="DNASU" id="143187"/>
<dbReference type="Ensembl" id="ENST00000393077.3">
    <molecule id="Q96AJ9-2"/>
    <property type="protein sequence ID" value="ENSP00000376792.2"/>
    <property type="gene ID" value="ENSG00000151532.15"/>
</dbReference>
<dbReference type="Ensembl" id="ENST00000432306.5">
    <molecule id="Q96AJ9-1"/>
    <property type="protein sequence ID" value="ENSP00000395017.1"/>
    <property type="gene ID" value="ENSG00000151532.15"/>
</dbReference>
<dbReference type="GeneID" id="143187"/>
<dbReference type="KEGG" id="hsa:143187"/>
<dbReference type="MANE-Select" id="ENST00000393077.3">
    <property type="protein sequence ID" value="ENSP00000376792.2"/>
    <property type="RefSeq nucleotide sequence ID" value="NM_145206.4"/>
    <property type="RefSeq protein sequence ID" value="NP_660207.2"/>
</dbReference>
<dbReference type="UCSC" id="uc001kzz.5">
    <molecule id="Q96AJ9-2"/>
    <property type="organism name" value="human"/>
</dbReference>
<dbReference type="AGR" id="HGNC:17792"/>
<dbReference type="CTD" id="143187"/>
<dbReference type="DisGeNET" id="143187"/>
<dbReference type="GeneCards" id="VTI1A"/>
<dbReference type="HGNC" id="HGNC:17792">
    <property type="gene designation" value="VTI1A"/>
</dbReference>
<dbReference type="HPA" id="ENSG00000151532">
    <property type="expression patterns" value="Low tissue specificity"/>
</dbReference>
<dbReference type="MalaCards" id="VTI1A"/>
<dbReference type="MIM" id="614316">
    <property type="type" value="gene"/>
</dbReference>
<dbReference type="neXtProt" id="NX_Q96AJ9"/>
<dbReference type="OpenTargets" id="ENSG00000151532"/>
<dbReference type="PharmGKB" id="PA134928049"/>
<dbReference type="VEuPathDB" id="HostDB:ENSG00000151532"/>
<dbReference type="eggNOG" id="KOG1666">
    <property type="taxonomic scope" value="Eukaryota"/>
</dbReference>
<dbReference type="GeneTree" id="ENSGT00950000183192"/>
<dbReference type="HOGENOM" id="CLU_075474_1_0_1"/>
<dbReference type="InParanoid" id="Q96AJ9"/>
<dbReference type="OMA" id="MEYEAND"/>
<dbReference type="OrthoDB" id="430637at2759"/>
<dbReference type="PAN-GO" id="Q96AJ9">
    <property type="GO annotations" value="12 GO annotations based on evolutionary models"/>
</dbReference>
<dbReference type="PhylomeDB" id="Q96AJ9"/>
<dbReference type="TreeFam" id="TF312874"/>
<dbReference type="PathwayCommons" id="Q96AJ9"/>
<dbReference type="Reactome" id="R-HSA-6811438">
    <property type="pathway name" value="Intra-Golgi traffic"/>
</dbReference>
<dbReference type="Reactome" id="R-HSA-6811440">
    <property type="pathway name" value="Retrograde transport at the Trans-Golgi-Network"/>
</dbReference>
<dbReference type="SignaLink" id="Q96AJ9"/>
<dbReference type="SIGNOR" id="Q96AJ9"/>
<dbReference type="BioGRID-ORCS" id="143187">
    <property type="hits" value="12 hits in 1154 CRISPR screens"/>
</dbReference>
<dbReference type="ChiTaRS" id="VTI1A">
    <property type="organism name" value="human"/>
</dbReference>
<dbReference type="GeneWiki" id="VTI1A"/>
<dbReference type="GenomeRNAi" id="143187"/>
<dbReference type="Pharos" id="Q96AJ9">
    <property type="development level" value="Tbio"/>
</dbReference>
<dbReference type="PRO" id="PR:Q96AJ9"/>
<dbReference type="Proteomes" id="UP000005640">
    <property type="component" value="Chromosome 10"/>
</dbReference>
<dbReference type="RNAct" id="Q96AJ9">
    <property type="molecule type" value="protein"/>
</dbReference>
<dbReference type="Bgee" id="ENSG00000151532">
    <property type="expression patterns" value="Expressed in sural nerve and 183 other cell types or tissues"/>
</dbReference>
<dbReference type="GO" id="GO:0005776">
    <property type="term" value="C:autophagosome"/>
    <property type="evidence" value="ECO:0000314"/>
    <property type="project" value="ParkinsonsUK-UCL"/>
</dbReference>
<dbReference type="GO" id="GO:0030136">
    <property type="term" value="C:clathrin-coated vesicle"/>
    <property type="evidence" value="ECO:0000250"/>
    <property type="project" value="ParkinsonsUK-UCL"/>
</dbReference>
<dbReference type="GO" id="GO:0005829">
    <property type="term" value="C:cytosol"/>
    <property type="evidence" value="ECO:0007669"/>
    <property type="project" value="GOC"/>
</dbReference>
<dbReference type="GO" id="GO:0005789">
    <property type="term" value="C:endoplasmic reticulum membrane"/>
    <property type="evidence" value="ECO:0000318"/>
    <property type="project" value="GO_Central"/>
</dbReference>
<dbReference type="GO" id="GO:0005768">
    <property type="term" value="C:endosome"/>
    <property type="evidence" value="ECO:0000250"/>
    <property type="project" value="ParkinsonsUK-UCL"/>
</dbReference>
<dbReference type="GO" id="GO:0012507">
    <property type="term" value="C:ER to Golgi transport vesicle membrane"/>
    <property type="evidence" value="ECO:0000318"/>
    <property type="project" value="GO_Central"/>
</dbReference>
<dbReference type="GO" id="GO:0005794">
    <property type="term" value="C:Golgi apparatus"/>
    <property type="evidence" value="ECO:0000314"/>
    <property type="project" value="UniProtKB"/>
</dbReference>
<dbReference type="GO" id="GO:0000139">
    <property type="term" value="C:Golgi membrane"/>
    <property type="evidence" value="ECO:0000304"/>
    <property type="project" value="Reactome"/>
</dbReference>
<dbReference type="GO" id="GO:0031902">
    <property type="term" value="C:late endosome membrane"/>
    <property type="evidence" value="ECO:0000318"/>
    <property type="project" value="GO_Central"/>
</dbReference>
<dbReference type="GO" id="GO:0044306">
    <property type="term" value="C:neuron projection terminus"/>
    <property type="evidence" value="ECO:0000250"/>
    <property type="project" value="ParkinsonsUK-UCL"/>
</dbReference>
<dbReference type="GO" id="GO:0043025">
    <property type="term" value="C:neuronal cell body"/>
    <property type="evidence" value="ECO:0000250"/>
    <property type="project" value="ParkinsonsUK-UCL"/>
</dbReference>
<dbReference type="GO" id="GO:0048471">
    <property type="term" value="C:perinuclear region of cytoplasm"/>
    <property type="evidence" value="ECO:0000250"/>
    <property type="project" value="ParkinsonsUK-UCL"/>
</dbReference>
<dbReference type="GO" id="GO:0031201">
    <property type="term" value="C:SNARE complex"/>
    <property type="evidence" value="ECO:0000250"/>
    <property type="project" value="ParkinsonsUK-UCL"/>
</dbReference>
<dbReference type="GO" id="GO:0008021">
    <property type="term" value="C:synaptic vesicle"/>
    <property type="evidence" value="ECO:0000250"/>
    <property type="project" value="ParkinsonsUK-UCL"/>
</dbReference>
<dbReference type="GO" id="GO:0032588">
    <property type="term" value="C:trans-Golgi network membrane"/>
    <property type="evidence" value="ECO:0000304"/>
    <property type="project" value="Reactome"/>
</dbReference>
<dbReference type="GO" id="GO:0005484">
    <property type="term" value="F:SNAP receptor activity"/>
    <property type="evidence" value="ECO:0000314"/>
    <property type="project" value="HGNC-UCL"/>
</dbReference>
<dbReference type="GO" id="GO:0000149">
    <property type="term" value="F:SNARE binding"/>
    <property type="evidence" value="ECO:0000318"/>
    <property type="project" value="GO_Central"/>
</dbReference>
<dbReference type="GO" id="GO:0006914">
    <property type="term" value="P:autophagy"/>
    <property type="evidence" value="ECO:0000315"/>
    <property type="project" value="ParkinsonsUK-UCL"/>
</dbReference>
<dbReference type="GO" id="GO:0032456">
    <property type="term" value="P:endocytic recycling"/>
    <property type="evidence" value="ECO:0000315"/>
    <property type="project" value="UniProtKB"/>
</dbReference>
<dbReference type="GO" id="GO:0006888">
    <property type="term" value="P:endoplasmic reticulum to Golgi vesicle-mediated transport"/>
    <property type="evidence" value="ECO:0000250"/>
    <property type="project" value="ParkinsonsUK-UCL"/>
</dbReference>
<dbReference type="GO" id="GO:0006896">
    <property type="term" value="P:Golgi to vacuole transport"/>
    <property type="evidence" value="ECO:0000318"/>
    <property type="project" value="GO_Central"/>
</dbReference>
<dbReference type="GO" id="GO:0006891">
    <property type="term" value="P:intra-Golgi vesicle-mediated transport"/>
    <property type="evidence" value="ECO:0000318"/>
    <property type="project" value="GO_Central"/>
</dbReference>
<dbReference type="GO" id="GO:0006886">
    <property type="term" value="P:intracellular protein transport"/>
    <property type="evidence" value="ECO:0007669"/>
    <property type="project" value="InterPro"/>
</dbReference>
<dbReference type="GO" id="GO:0016236">
    <property type="term" value="P:macroautophagy"/>
    <property type="evidence" value="ECO:0000318"/>
    <property type="project" value="GO_Central"/>
</dbReference>
<dbReference type="GO" id="GO:0042147">
    <property type="term" value="P:retrograde transport, endosome to Golgi"/>
    <property type="evidence" value="ECO:0000314"/>
    <property type="project" value="UniProtKB"/>
</dbReference>
<dbReference type="GO" id="GO:0048280">
    <property type="term" value="P:vesicle fusion with Golgi apparatus"/>
    <property type="evidence" value="ECO:0000250"/>
    <property type="project" value="ParkinsonsUK-UCL"/>
</dbReference>
<dbReference type="GO" id="GO:0050882">
    <property type="term" value="P:voluntary musculoskeletal movement"/>
    <property type="evidence" value="ECO:0000315"/>
    <property type="project" value="UniProtKB"/>
</dbReference>
<dbReference type="CDD" id="cd15891">
    <property type="entry name" value="SNARE_Vti1a"/>
    <property type="match status" value="1"/>
</dbReference>
<dbReference type="FunFam" id="1.20.5.110:FF:000078">
    <property type="entry name" value="Vesicle transport through interaction with t-SNAREs 1A"/>
    <property type="match status" value="1"/>
</dbReference>
<dbReference type="FunFam" id="1.20.58.400:FF:000001">
    <property type="entry name" value="Vesicle transport through interaction with t-SNAREs homolog 1A"/>
    <property type="match status" value="1"/>
</dbReference>
<dbReference type="Gene3D" id="1.20.5.110">
    <property type="match status" value="1"/>
</dbReference>
<dbReference type="Gene3D" id="1.20.58.400">
    <property type="entry name" value="t-snare proteins"/>
    <property type="match status" value="1"/>
</dbReference>
<dbReference type="InterPro" id="IPR027027">
    <property type="entry name" value="GOSR2/Membrin/Bos1"/>
</dbReference>
<dbReference type="InterPro" id="IPR010989">
    <property type="entry name" value="SNARE"/>
</dbReference>
<dbReference type="InterPro" id="IPR000727">
    <property type="entry name" value="T_SNARE_dom"/>
</dbReference>
<dbReference type="InterPro" id="IPR038407">
    <property type="entry name" value="v-SNARE_N_sf"/>
</dbReference>
<dbReference type="InterPro" id="IPR007705">
    <property type="entry name" value="Vesicle_trsprt_v-SNARE_N"/>
</dbReference>
<dbReference type="PANTHER" id="PTHR21230:SF26">
    <property type="entry name" value="VESICLE TRANSPORT THROUGH INTERACTION WITH T-SNARES HOMOLOG 1A"/>
    <property type="match status" value="1"/>
</dbReference>
<dbReference type="PANTHER" id="PTHR21230">
    <property type="entry name" value="VESICLE TRANSPORT V-SNARE PROTEIN VTI1-RELATED"/>
    <property type="match status" value="1"/>
</dbReference>
<dbReference type="Pfam" id="PF05008">
    <property type="entry name" value="V-SNARE"/>
    <property type="match status" value="1"/>
</dbReference>
<dbReference type="Pfam" id="PF12352">
    <property type="entry name" value="V-SNARE_C"/>
    <property type="match status" value="1"/>
</dbReference>
<dbReference type="PIRSF" id="PIRSF028865">
    <property type="entry name" value="Membrin-2"/>
    <property type="match status" value="1"/>
</dbReference>
<dbReference type="SMART" id="SM00397">
    <property type="entry name" value="t_SNARE"/>
    <property type="match status" value="1"/>
</dbReference>
<dbReference type="SUPFAM" id="SSF58038">
    <property type="entry name" value="SNARE fusion complex"/>
    <property type="match status" value="1"/>
</dbReference>
<dbReference type="SUPFAM" id="SSF47661">
    <property type="entry name" value="t-snare proteins"/>
    <property type="match status" value="1"/>
</dbReference>
<comment type="function">
    <text evidence="3 4">V-SNARE that mediates vesicle transport pathways through interactions with t-SNAREs on the target membrane. These interactions are proposed to mediate aspects of the specificity of vesicle trafficking and to promote fusion of the lipid bilayers. Involved in vesicular transport from the late endosomes to the trans-Golgi network. Along with VAMP7, involved in an non-conventional RAB1-dependent traffic route to the cell surface used by KCNIP1 and KCND2. May be involved in increased cytokine secretion associated with cellular senescence.</text>
</comment>
<comment type="subunit">
    <text evidence="1">Interacts with distinct SNARE complexes that contain either STX5 or STX6. Interacts with NAPA and, to a lesser extent, with NAPG. Identified in a complex containing STX6, STX12, VAMP4 and VTI1A.</text>
</comment>
<comment type="subcellular location">
    <subcellularLocation>
        <location evidence="4">Cytoplasmic vesicle</location>
    </subcellularLocation>
    <subcellularLocation>
        <location evidence="1">Golgi apparatus membrane</location>
        <topology evidence="1">Single-pass type IV membrane protein</topology>
    </subcellularLocation>
</comment>
<comment type="alternative products">
    <event type="alternative splicing"/>
    <isoform>
        <id>Q96AJ9-2</id>
        <name>2</name>
        <sequence type="displayed"/>
    </isoform>
    <isoform>
        <id>Q96AJ9-1</id>
        <name>1</name>
        <sequence type="described" ref="VSP_039848"/>
    </isoform>
</comment>
<comment type="similarity">
    <text evidence="6">Belongs to the VTI1 family.</text>
</comment>
<organism evidence="7">
    <name type="scientific">Homo sapiens</name>
    <name type="common">Human</name>
    <dbReference type="NCBI Taxonomy" id="9606"/>
    <lineage>
        <taxon>Eukaryota</taxon>
        <taxon>Metazoa</taxon>
        <taxon>Chordata</taxon>
        <taxon>Craniata</taxon>
        <taxon>Vertebrata</taxon>
        <taxon>Euteleostomi</taxon>
        <taxon>Mammalia</taxon>
        <taxon>Eutheria</taxon>
        <taxon>Euarchontoglires</taxon>
        <taxon>Primates</taxon>
        <taxon>Haplorrhini</taxon>
        <taxon>Catarrhini</taxon>
        <taxon>Hominidae</taxon>
        <taxon>Homo</taxon>
    </lineage>
</organism>
<feature type="chain" id="PRO_0000218225" description="Vesicle transport through interaction with t-SNAREs homolog 1A">
    <location>
        <begin position="1"/>
        <end position="217"/>
    </location>
</feature>
<feature type="topological domain" description="Cytoplasmic" evidence="2">
    <location>
        <begin position="1"/>
        <end position="192"/>
    </location>
</feature>
<feature type="transmembrane region" description="Helical" evidence="2">
    <location>
        <begin position="193"/>
        <end position="213"/>
    </location>
</feature>
<feature type="topological domain" description="Extracellular" evidence="2">
    <location>
        <begin position="214"/>
        <end position="217"/>
    </location>
</feature>
<feature type="coiled-coil region" evidence="2">
    <location>
        <begin position="31"/>
        <end position="92"/>
    </location>
</feature>
<feature type="coiled-coil region" evidence="2">
    <location>
        <begin position="112"/>
        <end position="178"/>
    </location>
</feature>
<feature type="splice variant" id="VSP_039848" description="In isoform 1." evidence="5">
    <original>IIQNRILLVILGIIVVITILMAITFSVRRH</original>
    <variation>GCSVKKQCNLSLAPKA</variation>
    <location>
        <begin position="188"/>
        <end position="217"/>
    </location>
</feature>
<feature type="sequence conflict" description="In Ref. 1; BAG64649." evidence="6" ref="1">
    <original>K</original>
    <variation>E</variation>
    <location>
        <position position="83"/>
    </location>
</feature>
<keyword id="KW-0025">Alternative splicing</keyword>
<keyword id="KW-0175">Coiled coil</keyword>
<keyword id="KW-0968">Cytoplasmic vesicle</keyword>
<keyword id="KW-0333">Golgi apparatus</keyword>
<keyword id="KW-0472">Membrane</keyword>
<keyword id="KW-0653">Protein transport</keyword>
<keyword id="KW-1267">Proteomics identification</keyword>
<keyword id="KW-1185">Reference proteome</keyword>
<keyword id="KW-0812">Transmembrane</keyword>
<keyword id="KW-1133">Transmembrane helix</keyword>
<keyword id="KW-0813">Transport</keyword>
<name>VTI1A_HUMAN</name>
<protein>
    <recommendedName>
        <fullName>Vesicle transport through interaction with t-SNAREs homolog 1A</fullName>
    </recommendedName>
    <alternativeName>
        <fullName>Vesicle transport v-SNARE protein Vti1-like 2</fullName>
    </alternativeName>
    <alternativeName>
        <fullName>Vti1-rp2</fullName>
    </alternativeName>
</protein>
<evidence type="ECO:0000250" key="1"/>
<evidence type="ECO:0000255" key="2"/>
<evidence type="ECO:0000269" key="3">
    <source>
    </source>
</evidence>
<evidence type="ECO:0000269" key="4">
    <source>
    </source>
</evidence>
<evidence type="ECO:0000303" key="5">
    <source>
    </source>
</evidence>
<evidence type="ECO:0000305" key="6"/>
<evidence type="ECO:0000312" key="7">
    <source>
        <dbReference type="EMBL" id="AAH17052.1"/>
    </source>
</evidence>
<reference key="1">
    <citation type="journal article" date="2004" name="Nat. Genet.">
        <title>Complete sequencing and characterization of 21,243 full-length human cDNAs.</title>
        <authorList>
            <person name="Ota T."/>
            <person name="Suzuki Y."/>
            <person name="Nishikawa T."/>
            <person name="Otsuki T."/>
            <person name="Sugiyama T."/>
            <person name="Irie R."/>
            <person name="Wakamatsu A."/>
            <person name="Hayashi K."/>
            <person name="Sato H."/>
            <person name="Nagai K."/>
            <person name="Kimura K."/>
            <person name="Makita H."/>
            <person name="Sekine M."/>
            <person name="Obayashi M."/>
            <person name="Nishi T."/>
            <person name="Shibahara T."/>
            <person name="Tanaka T."/>
            <person name="Ishii S."/>
            <person name="Yamamoto J."/>
            <person name="Saito K."/>
            <person name="Kawai Y."/>
            <person name="Isono Y."/>
            <person name="Nakamura Y."/>
            <person name="Nagahari K."/>
            <person name="Murakami K."/>
            <person name="Yasuda T."/>
            <person name="Iwayanagi T."/>
            <person name="Wagatsuma M."/>
            <person name="Shiratori A."/>
            <person name="Sudo H."/>
            <person name="Hosoiri T."/>
            <person name="Kaku Y."/>
            <person name="Kodaira H."/>
            <person name="Kondo H."/>
            <person name="Sugawara M."/>
            <person name="Takahashi M."/>
            <person name="Kanda K."/>
            <person name="Yokoi T."/>
            <person name="Furuya T."/>
            <person name="Kikkawa E."/>
            <person name="Omura Y."/>
            <person name="Abe K."/>
            <person name="Kamihara K."/>
            <person name="Katsuta N."/>
            <person name="Sato K."/>
            <person name="Tanikawa M."/>
            <person name="Yamazaki M."/>
            <person name="Ninomiya K."/>
            <person name="Ishibashi T."/>
            <person name="Yamashita H."/>
            <person name="Murakawa K."/>
            <person name="Fujimori K."/>
            <person name="Tanai H."/>
            <person name="Kimata M."/>
            <person name="Watanabe M."/>
            <person name="Hiraoka S."/>
            <person name="Chiba Y."/>
            <person name="Ishida S."/>
            <person name="Ono Y."/>
            <person name="Takiguchi S."/>
            <person name="Watanabe S."/>
            <person name="Yosida M."/>
            <person name="Hotuta T."/>
            <person name="Kusano J."/>
            <person name="Kanehori K."/>
            <person name="Takahashi-Fujii A."/>
            <person name="Hara H."/>
            <person name="Tanase T.-O."/>
            <person name="Nomura Y."/>
            <person name="Togiya S."/>
            <person name="Komai F."/>
            <person name="Hara R."/>
            <person name="Takeuchi K."/>
            <person name="Arita M."/>
            <person name="Imose N."/>
            <person name="Musashino K."/>
            <person name="Yuuki H."/>
            <person name="Oshima A."/>
            <person name="Sasaki N."/>
            <person name="Aotsuka S."/>
            <person name="Yoshikawa Y."/>
            <person name="Matsunawa H."/>
            <person name="Ichihara T."/>
            <person name="Shiohata N."/>
            <person name="Sano S."/>
            <person name="Moriya S."/>
            <person name="Momiyama H."/>
            <person name="Satoh N."/>
            <person name="Takami S."/>
            <person name="Terashima Y."/>
            <person name="Suzuki O."/>
            <person name="Nakagawa S."/>
            <person name="Senoh A."/>
            <person name="Mizoguchi H."/>
            <person name="Goto Y."/>
            <person name="Shimizu F."/>
            <person name="Wakebe H."/>
            <person name="Hishigaki H."/>
            <person name="Watanabe T."/>
            <person name="Sugiyama A."/>
            <person name="Takemoto M."/>
            <person name="Kawakami B."/>
            <person name="Yamazaki M."/>
            <person name="Watanabe K."/>
            <person name="Kumagai A."/>
            <person name="Itakura S."/>
            <person name="Fukuzumi Y."/>
            <person name="Fujimori Y."/>
            <person name="Komiyama M."/>
            <person name="Tashiro H."/>
            <person name="Tanigami A."/>
            <person name="Fujiwara T."/>
            <person name="Ono T."/>
            <person name="Yamada K."/>
            <person name="Fujii Y."/>
            <person name="Ozaki K."/>
            <person name="Hirao M."/>
            <person name="Ohmori Y."/>
            <person name="Kawabata A."/>
            <person name="Hikiji T."/>
            <person name="Kobatake N."/>
            <person name="Inagaki H."/>
            <person name="Ikema Y."/>
            <person name="Okamoto S."/>
            <person name="Okitani R."/>
            <person name="Kawakami T."/>
            <person name="Noguchi S."/>
            <person name="Itoh T."/>
            <person name="Shigeta K."/>
            <person name="Senba T."/>
            <person name="Matsumura K."/>
            <person name="Nakajima Y."/>
            <person name="Mizuno T."/>
            <person name="Morinaga M."/>
            <person name="Sasaki M."/>
            <person name="Togashi T."/>
            <person name="Oyama M."/>
            <person name="Hata H."/>
            <person name="Watanabe M."/>
            <person name="Komatsu T."/>
            <person name="Mizushima-Sugano J."/>
            <person name="Satoh T."/>
            <person name="Shirai Y."/>
            <person name="Takahashi Y."/>
            <person name="Nakagawa K."/>
            <person name="Okumura K."/>
            <person name="Nagase T."/>
            <person name="Nomura N."/>
            <person name="Kikuchi H."/>
            <person name="Masuho Y."/>
            <person name="Yamashita R."/>
            <person name="Nakai K."/>
            <person name="Yada T."/>
            <person name="Nakamura Y."/>
            <person name="Ohara O."/>
            <person name="Isogai T."/>
            <person name="Sugano S."/>
        </authorList>
    </citation>
    <scope>NUCLEOTIDE SEQUENCE [LARGE SCALE MRNA] (ISOFORM 2)</scope>
    <source>
        <tissue>Thymus</tissue>
    </source>
</reference>
<reference key="2">
    <citation type="journal article" date="2004" name="Nature">
        <title>The DNA sequence and comparative analysis of human chromosome 10.</title>
        <authorList>
            <person name="Deloukas P."/>
            <person name="Earthrowl M.E."/>
            <person name="Grafham D.V."/>
            <person name="Rubenfield M."/>
            <person name="French L."/>
            <person name="Steward C.A."/>
            <person name="Sims S.K."/>
            <person name="Jones M.C."/>
            <person name="Searle S."/>
            <person name="Scott C."/>
            <person name="Howe K."/>
            <person name="Hunt S.E."/>
            <person name="Andrews T.D."/>
            <person name="Gilbert J.G.R."/>
            <person name="Swarbreck D."/>
            <person name="Ashurst J.L."/>
            <person name="Taylor A."/>
            <person name="Battles J."/>
            <person name="Bird C.P."/>
            <person name="Ainscough R."/>
            <person name="Almeida J.P."/>
            <person name="Ashwell R.I.S."/>
            <person name="Ambrose K.D."/>
            <person name="Babbage A.K."/>
            <person name="Bagguley C.L."/>
            <person name="Bailey J."/>
            <person name="Banerjee R."/>
            <person name="Bates K."/>
            <person name="Beasley H."/>
            <person name="Bray-Allen S."/>
            <person name="Brown A.J."/>
            <person name="Brown J.Y."/>
            <person name="Burford D.C."/>
            <person name="Burrill W."/>
            <person name="Burton J."/>
            <person name="Cahill P."/>
            <person name="Camire D."/>
            <person name="Carter N.P."/>
            <person name="Chapman J.C."/>
            <person name="Clark S.Y."/>
            <person name="Clarke G."/>
            <person name="Clee C.M."/>
            <person name="Clegg S."/>
            <person name="Corby N."/>
            <person name="Coulson A."/>
            <person name="Dhami P."/>
            <person name="Dutta I."/>
            <person name="Dunn M."/>
            <person name="Faulkner L."/>
            <person name="Frankish A."/>
            <person name="Frankland J.A."/>
            <person name="Garner P."/>
            <person name="Garnett J."/>
            <person name="Gribble S."/>
            <person name="Griffiths C."/>
            <person name="Grocock R."/>
            <person name="Gustafson E."/>
            <person name="Hammond S."/>
            <person name="Harley J.L."/>
            <person name="Hart E."/>
            <person name="Heath P.D."/>
            <person name="Ho T.P."/>
            <person name="Hopkins B."/>
            <person name="Horne J."/>
            <person name="Howden P.J."/>
            <person name="Huckle E."/>
            <person name="Hynds C."/>
            <person name="Johnson C."/>
            <person name="Johnson D."/>
            <person name="Kana A."/>
            <person name="Kay M."/>
            <person name="Kimberley A.M."/>
            <person name="Kershaw J.K."/>
            <person name="Kokkinaki M."/>
            <person name="Laird G.K."/>
            <person name="Lawlor S."/>
            <person name="Lee H.M."/>
            <person name="Leongamornlert D.A."/>
            <person name="Laird G."/>
            <person name="Lloyd C."/>
            <person name="Lloyd D.M."/>
            <person name="Loveland J."/>
            <person name="Lovell J."/>
            <person name="McLaren S."/>
            <person name="McLay K.E."/>
            <person name="McMurray A."/>
            <person name="Mashreghi-Mohammadi M."/>
            <person name="Matthews L."/>
            <person name="Milne S."/>
            <person name="Nickerson T."/>
            <person name="Nguyen M."/>
            <person name="Overton-Larty E."/>
            <person name="Palmer S.A."/>
            <person name="Pearce A.V."/>
            <person name="Peck A.I."/>
            <person name="Pelan S."/>
            <person name="Phillimore B."/>
            <person name="Porter K."/>
            <person name="Rice C.M."/>
            <person name="Rogosin A."/>
            <person name="Ross M.T."/>
            <person name="Sarafidou T."/>
            <person name="Sehra H.K."/>
            <person name="Shownkeen R."/>
            <person name="Skuce C.D."/>
            <person name="Smith M."/>
            <person name="Standring L."/>
            <person name="Sycamore N."/>
            <person name="Tester J."/>
            <person name="Thorpe A."/>
            <person name="Torcasso W."/>
            <person name="Tracey A."/>
            <person name="Tromans A."/>
            <person name="Tsolas J."/>
            <person name="Wall M."/>
            <person name="Walsh J."/>
            <person name="Wang H."/>
            <person name="Weinstock K."/>
            <person name="West A.P."/>
            <person name="Willey D.L."/>
            <person name="Whitehead S.L."/>
            <person name="Wilming L."/>
            <person name="Wray P.W."/>
            <person name="Young L."/>
            <person name="Chen Y."/>
            <person name="Lovering R.C."/>
            <person name="Moschonas N.K."/>
            <person name="Siebert R."/>
            <person name="Fechtel K."/>
            <person name="Bentley D."/>
            <person name="Durbin R.M."/>
            <person name="Hubbard T."/>
            <person name="Doucette-Stamm L."/>
            <person name="Beck S."/>
            <person name="Smith D.R."/>
            <person name="Rogers J."/>
        </authorList>
    </citation>
    <scope>NUCLEOTIDE SEQUENCE [LARGE SCALE GENOMIC DNA]</scope>
</reference>
<reference evidence="7" key="3">
    <citation type="submission" date="2005-09" db="EMBL/GenBank/DDBJ databases">
        <authorList>
            <person name="Mural R.J."/>
            <person name="Istrail S."/>
            <person name="Sutton G.G."/>
            <person name="Florea L."/>
            <person name="Halpern A.L."/>
            <person name="Mobarry C.M."/>
            <person name="Lippert R."/>
            <person name="Walenz B."/>
            <person name="Shatkay H."/>
            <person name="Dew I."/>
            <person name="Miller J.R."/>
            <person name="Flanigan M.J."/>
            <person name="Edwards N.J."/>
            <person name="Bolanos R."/>
            <person name="Fasulo D."/>
            <person name="Halldorsson B.V."/>
            <person name="Hannenhalli S."/>
            <person name="Turner R."/>
            <person name="Yooseph S."/>
            <person name="Lu F."/>
            <person name="Nusskern D.R."/>
            <person name="Shue B.C."/>
            <person name="Zheng X.H."/>
            <person name="Zhong F."/>
            <person name="Delcher A.L."/>
            <person name="Huson D.H."/>
            <person name="Kravitz S.A."/>
            <person name="Mouchard L."/>
            <person name="Reinert K."/>
            <person name="Remington K.A."/>
            <person name="Clark A.G."/>
            <person name="Waterman M.S."/>
            <person name="Eichler E.E."/>
            <person name="Adams M.D."/>
            <person name="Hunkapiller M.W."/>
            <person name="Myers E.W."/>
            <person name="Venter J.C."/>
        </authorList>
    </citation>
    <scope>NUCLEOTIDE SEQUENCE [LARGE SCALE GENOMIC DNA]</scope>
</reference>
<reference key="4">
    <citation type="journal article" date="2004" name="Genome Res.">
        <title>The status, quality, and expansion of the NIH full-length cDNA project: the Mammalian Gene Collection (MGC).</title>
        <authorList>
            <consortium name="The MGC Project Team"/>
        </authorList>
    </citation>
    <scope>NUCLEOTIDE SEQUENCE [LARGE SCALE MRNA] (ISOFORM 1)</scope>
    <source>
        <tissue>Lung</tissue>
    </source>
</reference>
<reference key="5">
    <citation type="journal article" date="2008" name="J. Cell Biol.">
        <title>A syntaxin 10-SNARE complex distinguishes two distinct transport routes from endosomes to the trans-Golgi in human cells.</title>
        <authorList>
            <person name="Ganley I.G."/>
            <person name="Espinosa E."/>
            <person name="Pfeffer S.R."/>
        </authorList>
    </citation>
    <scope>FUNCTION</scope>
</reference>
<reference key="6">
    <citation type="journal article" date="2009" name="Biochem. J.">
        <title>A VAMP7/Vti1a SNARE complex distinguishes a non-conventional traffic route to the cell surface used by KChIP1 and Kv4 potassium channels.</title>
        <authorList>
            <person name="Flowerdew S.E."/>
            <person name="Burgoyne R.D."/>
        </authorList>
    </citation>
    <scope>FUNCTION</scope>
    <scope>SUBCELLULAR LOCATION</scope>
</reference>
<reference key="7">
    <citation type="journal article" date="2011" name="BMC Syst. Biol.">
        <title>Initial characterization of the human central proteome.</title>
        <authorList>
            <person name="Burkard T.R."/>
            <person name="Planyavsky M."/>
            <person name="Kaupe I."/>
            <person name="Breitwieser F.P."/>
            <person name="Buerckstuemmer T."/>
            <person name="Bennett K.L."/>
            <person name="Superti-Furga G."/>
            <person name="Colinge J."/>
        </authorList>
    </citation>
    <scope>IDENTIFICATION BY MASS SPECTROMETRY [LARGE SCALE ANALYSIS]</scope>
</reference>
<reference key="8">
    <citation type="journal article" date="2015" name="Proteomics">
        <title>N-terminome analysis of the human mitochondrial proteome.</title>
        <authorList>
            <person name="Vaca Jacome A.S."/>
            <person name="Rabilloud T."/>
            <person name="Schaeffer-Reiss C."/>
            <person name="Rompais M."/>
            <person name="Ayoub D."/>
            <person name="Lane L."/>
            <person name="Bairoch A."/>
            <person name="Van Dorsselaer A."/>
            <person name="Carapito C."/>
        </authorList>
    </citation>
    <scope>IDENTIFICATION BY MASS SPECTROMETRY [LARGE SCALE ANALYSIS]</scope>
</reference>
<sequence length="217" mass="25218">MSSDFEGYEQDFAVLTAEITSKIARVPRLPPDEKKQMVANVEKQLEEAKELLEQMDLEVREIPPQSRGMYSNRMRSYKQEMGKLETDFKRSRIAYSDEVRNELLGDDGNSSENQRAHLLDNTERLERSSRRLEAGYQIAVETEQIGQEMLENLSHDREKIQRARERLRETDANLGKSSRILTGMLRRIIQNRILLVILGIIVVITILMAITFSVRRH</sequence>
<proteinExistence type="evidence at protein level"/>